<reference key="1">
    <citation type="submission" date="2008-05" db="EMBL/GenBank/DDBJ databases">
        <title>Complete sequence of Chlorobium limicola DSM 245.</title>
        <authorList>
            <consortium name="US DOE Joint Genome Institute"/>
            <person name="Lucas S."/>
            <person name="Copeland A."/>
            <person name="Lapidus A."/>
            <person name="Glavina del Rio T."/>
            <person name="Dalin E."/>
            <person name="Tice H."/>
            <person name="Bruce D."/>
            <person name="Goodwin L."/>
            <person name="Pitluck S."/>
            <person name="Schmutz J."/>
            <person name="Larimer F."/>
            <person name="Land M."/>
            <person name="Hauser L."/>
            <person name="Kyrpides N."/>
            <person name="Ovchinnikova G."/>
            <person name="Zhao F."/>
            <person name="Li T."/>
            <person name="Liu Z."/>
            <person name="Overmann J."/>
            <person name="Bryant D.A."/>
            <person name="Richardson P."/>
        </authorList>
    </citation>
    <scope>NUCLEOTIDE SEQUENCE [LARGE SCALE GENOMIC DNA]</scope>
    <source>
        <strain>DSM 245 / NBRC 103803 / 6330</strain>
    </source>
</reference>
<sequence length="151" mass="16798">MRKVKPARKLGRTAAHRKATLANLTTQLLVYKRIETTEAKAKETRKVVEKIITKARKGTVHAQREIFKSIRDKEAVKMLFEDIVSKIGDRNGGYTRIIKLAPRFGDAAKMAVIELVDYAEAPSKQLPGKQDRAKRVKGSKKTEVVAAAAGE</sequence>
<comment type="subunit">
    <text evidence="1">Part of the 50S ribosomal subunit. Contacts protein L32.</text>
</comment>
<comment type="similarity">
    <text evidence="1">Belongs to the bacterial ribosomal protein bL17 family.</text>
</comment>
<gene>
    <name evidence="1" type="primary">rplQ</name>
    <name type="ordered locus">Clim_2201</name>
</gene>
<name>RL17_CHLL2</name>
<evidence type="ECO:0000255" key="1">
    <source>
        <dbReference type="HAMAP-Rule" id="MF_01368"/>
    </source>
</evidence>
<evidence type="ECO:0000305" key="2"/>
<feature type="chain" id="PRO_1000144394" description="Large ribosomal subunit protein bL17">
    <location>
        <begin position="1"/>
        <end position="151"/>
    </location>
</feature>
<dbReference type="EMBL" id="CP001097">
    <property type="protein sequence ID" value="ACD91225.1"/>
    <property type="molecule type" value="Genomic_DNA"/>
</dbReference>
<dbReference type="RefSeq" id="WP_012467093.1">
    <property type="nucleotide sequence ID" value="NC_010803.1"/>
</dbReference>
<dbReference type="SMR" id="B3EGW2"/>
<dbReference type="STRING" id="290315.Clim_2201"/>
<dbReference type="KEGG" id="cli:Clim_2201"/>
<dbReference type="eggNOG" id="COG0203">
    <property type="taxonomic scope" value="Bacteria"/>
</dbReference>
<dbReference type="HOGENOM" id="CLU_074407_0_1_10"/>
<dbReference type="OrthoDB" id="9809073at2"/>
<dbReference type="Proteomes" id="UP000008841">
    <property type="component" value="Chromosome"/>
</dbReference>
<dbReference type="GO" id="GO:0022625">
    <property type="term" value="C:cytosolic large ribosomal subunit"/>
    <property type="evidence" value="ECO:0007669"/>
    <property type="project" value="TreeGrafter"/>
</dbReference>
<dbReference type="GO" id="GO:0003735">
    <property type="term" value="F:structural constituent of ribosome"/>
    <property type="evidence" value="ECO:0007669"/>
    <property type="project" value="InterPro"/>
</dbReference>
<dbReference type="GO" id="GO:0006412">
    <property type="term" value="P:translation"/>
    <property type="evidence" value="ECO:0007669"/>
    <property type="project" value="UniProtKB-UniRule"/>
</dbReference>
<dbReference type="Gene3D" id="3.90.1030.10">
    <property type="entry name" value="Ribosomal protein L17"/>
    <property type="match status" value="1"/>
</dbReference>
<dbReference type="HAMAP" id="MF_01368">
    <property type="entry name" value="Ribosomal_bL17"/>
    <property type="match status" value="1"/>
</dbReference>
<dbReference type="InterPro" id="IPR000456">
    <property type="entry name" value="Ribosomal_bL17"/>
</dbReference>
<dbReference type="InterPro" id="IPR047859">
    <property type="entry name" value="Ribosomal_bL17_CS"/>
</dbReference>
<dbReference type="InterPro" id="IPR036373">
    <property type="entry name" value="Ribosomal_bL17_sf"/>
</dbReference>
<dbReference type="NCBIfam" id="TIGR00059">
    <property type="entry name" value="L17"/>
    <property type="match status" value="1"/>
</dbReference>
<dbReference type="PANTHER" id="PTHR14413:SF16">
    <property type="entry name" value="LARGE RIBOSOMAL SUBUNIT PROTEIN BL17M"/>
    <property type="match status" value="1"/>
</dbReference>
<dbReference type="PANTHER" id="PTHR14413">
    <property type="entry name" value="RIBOSOMAL PROTEIN L17"/>
    <property type="match status" value="1"/>
</dbReference>
<dbReference type="Pfam" id="PF01196">
    <property type="entry name" value="Ribosomal_L17"/>
    <property type="match status" value="1"/>
</dbReference>
<dbReference type="SUPFAM" id="SSF64263">
    <property type="entry name" value="Prokaryotic ribosomal protein L17"/>
    <property type="match status" value="1"/>
</dbReference>
<dbReference type="PROSITE" id="PS01167">
    <property type="entry name" value="RIBOSOMAL_L17"/>
    <property type="match status" value="1"/>
</dbReference>
<accession>B3EGW2</accession>
<organism>
    <name type="scientific">Chlorobium limicola (strain DSM 245 / NBRC 103803 / 6330)</name>
    <dbReference type="NCBI Taxonomy" id="290315"/>
    <lineage>
        <taxon>Bacteria</taxon>
        <taxon>Pseudomonadati</taxon>
        <taxon>Chlorobiota</taxon>
        <taxon>Chlorobiia</taxon>
        <taxon>Chlorobiales</taxon>
        <taxon>Chlorobiaceae</taxon>
        <taxon>Chlorobium/Pelodictyon group</taxon>
        <taxon>Chlorobium</taxon>
    </lineage>
</organism>
<proteinExistence type="inferred from homology"/>
<keyword id="KW-0687">Ribonucleoprotein</keyword>
<keyword id="KW-0689">Ribosomal protein</keyword>
<protein>
    <recommendedName>
        <fullName evidence="1">Large ribosomal subunit protein bL17</fullName>
    </recommendedName>
    <alternativeName>
        <fullName evidence="2">50S ribosomal protein L17</fullName>
    </alternativeName>
</protein>